<dbReference type="EMBL" id="AP006841">
    <property type="protein sequence ID" value="BAD46847.1"/>
    <property type="molecule type" value="Genomic_DNA"/>
</dbReference>
<dbReference type="RefSeq" id="WP_005783702.1">
    <property type="nucleotide sequence ID" value="NZ_UYXF01000007.1"/>
</dbReference>
<dbReference type="RefSeq" id="YP_097381.1">
    <property type="nucleotide sequence ID" value="NC_006347.1"/>
</dbReference>
<dbReference type="SMR" id="Q650H7"/>
<dbReference type="STRING" id="295405.BF0098"/>
<dbReference type="GeneID" id="60368793"/>
<dbReference type="KEGG" id="bfr:BF0098"/>
<dbReference type="PATRIC" id="fig|295405.11.peg.136"/>
<dbReference type="HOGENOM" id="CLU_014841_3_2_10"/>
<dbReference type="OrthoDB" id="9804933at2"/>
<dbReference type="Proteomes" id="UP000002197">
    <property type="component" value="Chromosome"/>
</dbReference>
<dbReference type="GO" id="GO:0005737">
    <property type="term" value="C:cytoplasm"/>
    <property type="evidence" value="ECO:0007669"/>
    <property type="project" value="UniProtKB-SubCell"/>
</dbReference>
<dbReference type="GO" id="GO:0009380">
    <property type="term" value="C:excinuclease repair complex"/>
    <property type="evidence" value="ECO:0007669"/>
    <property type="project" value="InterPro"/>
</dbReference>
<dbReference type="GO" id="GO:0003677">
    <property type="term" value="F:DNA binding"/>
    <property type="evidence" value="ECO:0007669"/>
    <property type="project" value="UniProtKB-UniRule"/>
</dbReference>
<dbReference type="GO" id="GO:0009381">
    <property type="term" value="F:excinuclease ABC activity"/>
    <property type="evidence" value="ECO:0007669"/>
    <property type="project" value="UniProtKB-UniRule"/>
</dbReference>
<dbReference type="GO" id="GO:0006289">
    <property type="term" value="P:nucleotide-excision repair"/>
    <property type="evidence" value="ECO:0007669"/>
    <property type="project" value="UniProtKB-UniRule"/>
</dbReference>
<dbReference type="GO" id="GO:0009432">
    <property type="term" value="P:SOS response"/>
    <property type="evidence" value="ECO:0007669"/>
    <property type="project" value="UniProtKB-UniRule"/>
</dbReference>
<dbReference type="CDD" id="cd10434">
    <property type="entry name" value="GIY-YIG_UvrC_Cho"/>
    <property type="match status" value="1"/>
</dbReference>
<dbReference type="FunFam" id="3.30.420.340:FF:000002">
    <property type="entry name" value="UvrABC system protein C"/>
    <property type="match status" value="1"/>
</dbReference>
<dbReference type="FunFam" id="3.40.1440.10:FF:000001">
    <property type="entry name" value="UvrABC system protein C"/>
    <property type="match status" value="1"/>
</dbReference>
<dbReference type="Gene3D" id="1.10.150.20">
    <property type="entry name" value="5' to 3' exonuclease, C-terminal subdomain"/>
    <property type="match status" value="1"/>
</dbReference>
<dbReference type="Gene3D" id="3.40.1440.10">
    <property type="entry name" value="GIY-YIG endonuclease"/>
    <property type="match status" value="1"/>
</dbReference>
<dbReference type="Gene3D" id="3.30.420.340">
    <property type="entry name" value="UvrC, RNAse H endonuclease domain"/>
    <property type="match status" value="1"/>
</dbReference>
<dbReference type="HAMAP" id="MF_00203">
    <property type="entry name" value="UvrC"/>
    <property type="match status" value="1"/>
</dbReference>
<dbReference type="InterPro" id="IPR000305">
    <property type="entry name" value="GIY-YIG_endonuc"/>
</dbReference>
<dbReference type="InterPro" id="IPR035901">
    <property type="entry name" value="GIY-YIG_endonuc_sf"/>
</dbReference>
<dbReference type="InterPro" id="IPR047296">
    <property type="entry name" value="GIY-YIG_UvrC_Cho"/>
</dbReference>
<dbReference type="InterPro" id="IPR010994">
    <property type="entry name" value="RuvA_2-like"/>
</dbReference>
<dbReference type="InterPro" id="IPR036876">
    <property type="entry name" value="UVR_dom_sf"/>
</dbReference>
<dbReference type="InterPro" id="IPR050066">
    <property type="entry name" value="UvrABC_protein_C"/>
</dbReference>
<dbReference type="InterPro" id="IPR004791">
    <property type="entry name" value="UvrC"/>
</dbReference>
<dbReference type="InterPro" id="IPR001162">
    <property type="entry name" value="UvrC_RNase_H_dom"/>
</dbReference>
<dbReference type="InterPro" id="IPR038476">
    <property type="entry name" value="UvrC_RNase_H_dom_sf"/>
</dbReference>
<dbReference type="NCBIfam" id="TIGR00194">
    <property type="entry name" value="uvrC"/>
    <property type="match status" value="1"/>
</dbReference>
<dbReference type="PANTHER" id="PTHR30562:SF1">
    <property type="entry name" value="UVRABC SYSTEM PROTEIN C"/>
    <property type="match status" value="1"/>
</dbReference>
<dbReference type="PANTHER" id="PTHR30562">
    <property type="entry name" value="UVRC/OXIDOREDUCTASE"/>
    <property type="match status" value="1"/>
</dbReference>
<dbReference type="Pfam" id="PF01541">
    <property type="entry name" value="GIY-YIG"/>
    <property type="match status" value="1"/>
</dbReference>
<dbReference type="Pfam" id="PF14520">
    <property type="entry name" value="HHH_5"/>
    <property type="match status" value="1"/>
</dbReference>
<dbReference type="Pfam" id="PF22920">
    <property type="entry name" value="UvrC_RNaseH"/>
    <property type="match status" value="1"/>
</dbReference>
<dbReference type="Pfam" id="PF08459">
    <property type="entry name" value="UvrC_RNaseH_dom"/>
    <property type="match status" value="1"/>
</dbReference>
<dbReference type="SMART" id="SM00465">
    <property type="entry name" value="GIYc"/>
    <property type="match status" value="1"/>
</dbReference>
<dbReference type="SUPFAM" id="SSF46600">
    <property type="entry name" value="C-terminal UvrC-binding domain of UvrB"/>
    <property type="match status" value="1"/>
</dbReference>
<dbReference type="SUPFAM" id="SSF82771">
    <property type="entry name" value="GIY-YIG endonuclease"/>
    <property type="match status" value="1"/>
</dbReference>
<dbReference type="SUPFAM" id="SSF47781">
    <property type="entry name" value="RuvA domain 2-like"/>
    <property type="match status" value="1"/>
</dbReference>
<dbReference type="PROSITE" id="PS50164">
    <property type="entry name" value="GIY_YIG"/>
    <property type="match status" value="1"/>
</dbReference>
<dbReference type="PROSITE" id="PS50165">
    <property type="entry name" value="UVRC"/>
    <property type="match status" value="1"/>
</dbReference>
<keyword id="KW-0963">Cytoplasm</keyword>
<keyword id="KW-0227">DNA damage</keyword>
<keyword id="KW-0228">DNA excision</keyword>
<keyword id="KW-0234">DNA repair</keyword>
<keyword id="KW-0267">Excision nuclease</keyword>
<keyword id="KW-0742">SOS response</keyword>
<gene>
    <name evidence="1" type="primary">uvrC</name>
    <name type="ordered locus">BF0098</name>
</gene>
<protein>
    <recommendedName>
        <fullName evidence="1">UvrABC system protein C</fullName>
        <shortName evidence="1">Protein UvrC</shortName>
    </recommendedName>
    <alternativeName>
        <fullName evidence="1">Excinuclease ABC subunit C</fullName>
    </alternativeName>
</protein>
<organism>
    <name type="scientific">Bacteroides fragilis (strain YCH46)</name>
    <dbReference type="NCBI Taxonomy" id="295405"/>
    <lineage>
        <taxon>Bacteria</taxon>
        <taxon>Pseudomonadati</taxon>
        <taxon>Bacteroidota</taxon>
        <taxon>Bacteroidia</taxon>
        <taxon>Bacteroidales</taxon>
        <taxon>Bacteroidaceae</taxon>
        <taxon>Bacteroides</taxon>
    </lineage>
</organism>
<proteinExistence type="inferred from homology"/>
<evidence type="ECO:0000255" key="1">
    <source>
        <dbReference type="HAMAP-Rule" id="MF_00203"/>
    </source>
</evidence>
<feature type="chain" id="PRO_0000227400" description="UvrABC system protein C">
    <location>
        <begin position="1"/>
        <end position="608"/>
    </location>
</feature>
<feature type="domain" description="GIY-YIG" evidence="1">
    <location>
        <begin position="22"/>
        <end position="100"/>
    </location>
</feature>
<feature type="domain" description="UVR" evidence="1">
    <location>
        <begin position="214"/>
        <end position="249"/>
    </location>
</feature>
<name>UVRC_BACFR</name>
<comment type="function">
    <text evidence="1">The UvrABC repair system catalyzes the recognition and processing of DNA lesions. UvrC both incises the 5' and 3' sides of the lesion. The N-terminal half is responsible for the 3' incision and the C-terminal half is responsible for the 5' incision.</text>
</comment>
<comment type="subunit">
    <text evidence="1">Interacts with UvrB in an incision complex.</text>
</comment>
<comment type="subcellular location">
    <subcellularLocation>
        <location evidence="1">Cytoplasm</location>
    </subcellularLocation>
</comment>
<comment type="similarity">
    <text evidence="1">Belongs to the UvrC family.</text>
</comment>
<reference key="1">
    <citation type="journal article" date="2004" name="Proc. Natl. Acad. Sci. U.S.A.">
        <title>Genomic analysis of Bacteroides fragilis reveals extensive DNA inversions regulating cell surface adaptation.</title>
        <authorList>
            <person name="Kuwahara T."/>
            <person name="Yamashita A."/>
            <person name="Hirakawa H."/>
            <person name="Nakayama H."/>
            <person name="Toh H."/>
            <person name="Okada N."/>
            <person name="Kuhara S."/>
            <person name="Hattori M."/>
            <person name="Hayashi T."/>
            <person name="Ohnishi Y."/>
        </authorList>
    </citation>
    <scope>NUCLEOTIDE SEQUENCE [LARGE SCALE GENOMIC DNA]</scope>
    <source>
        <strain>YCH46</strain>
    </source>
</reference>
<sequence>MDTNQELKTSEYLKGIVSNLPEKPGIYQYLNAEGTIIYVGKAKNLKRRVYSYFSKEHQPGKTRVLVSKIADIRYIVVNSEEDALLLENNLIKKYKPRYNVLLKDDKTYPSICVQNEYFPRVFKTRRIIRNGSSYYGPYSHSPSMHAVLDLIKHLYPLRTCNLNLSPENIRAGKFNVCLEYHIKNCAGPCIGLQSQEEYLKNIAEIKEILKGNTQEISRLLYQRMQDLAAEMKFEEAQKVKEKYALIENYRSKSEVVSSVLHNIDVFSIEEDGEKSAFINYLHITNGAINQAFTFEYKKKLNETKEELLTLGIIEMRERYKSASREIIVPFDIEIELNDVTFTIPQRGDKKKLLELSLLNVKQYKADRMKQAEKLNPEQRSMRLMKEIQQELHLDRLPMQIECFDNSNIQGTDAVAACVVFKKAKPSKSDYRKYNIKTVVGADDYASMKEVVRRRYQRAIEEESPLPDLIITDGGKGQMEVVRQVMEELQLDIPIAGLAKDRKHRTSEVLFGFPPQTIGIKQHSPLFRLLEQIQDEVHRFAITFHRDKRSKRQVASALDNIKGIGEKTKTALLKEFKSVKRIKEATIEEVSAIIGESKAKIIKEGLDNH</sequence>
<accession>Q650H7</accession>